<feature type="chain" id="PRO_0000422857" description="Myosin-1">
    <location>
        <begin position="1"/>
        <end position="1166"/>
    </location>
</feature>
<feature type="domain" description="Myosin N-terminal SH3-like" evidence="5">
    <location>
        <begin position="112"/>
        <end position="161"/>
    </location>
</feature>
<feature type="domain" description="Myosin motor" evidence="4">
    <location>
        <begin position="165"/>
        <end position="837"/>
    </location>
</feature>
<feature type="domain" description="IQ 1" evidence="3">
    <location>
        <begin position="839"/>
        <end position="868"/>
    </location>
</feature>
<feature type="domain" description="IQ 2" evidence="3">
    <location>
        <begin position="862"/>
        <end position="891"/>
    </location>
</feature>
<feature type="domain" description="IQ 3" evidence="3">
    <location>
        <begin position="888"/>
        <end position="917"/>
    </location>
</feature>
<feature type="domain" description="IQ 4" evidence="3">
    <location>
        <begin position="911"/>
        <end position="940"/>
    </location>
</feature>
<feature type="region of interest" description="Disordered" evidence="6">
    <location>
        <begin position="1"/>
        <end position="71"/>
    </location>
</feature>
<feature type="region of interest" description="Actin-binding" evidence="2">
    <location>
        <begin position="589"/>
        <end position="623"/>
    </location>
</feature>
<feature type="region of interest" description="Actin-binding" evidence="1">
    <location>
        <begin position="717"/>
        <end position="739"/>
    </location>
</feature>
<feature type="region of interest" description="Disordered" evidence="6">
    <location>
        <begin position="1030"/>
        <end position="1065"/>
    </location>
</feature>
<feature type="coiled-coil region" evidence="2">
    <location>
        <begin position="955"/>
        <end position="1005"/>
    </location>
</feature>
<feature type="compositionally biased region" description="Polar residues" evidence="6">
    <location>
        <begin position="1"/>
        <end position="13"/>
    </location>
</feature>
<feature type="compositionally biased region" description="Polar residues" evidence="6">
    <location>
        <begin position="32"/>
        <end position="45"/>
    </location>
</feature>
<feature type="compositionally biased region" description="Polar residues" evidence="6">
    <location>
        <begin position="1032"/>
        <end position="1060"/>
    </location>
</feature>
<feature type="binding site" evidence="2">
    <location>
        <begin position="256"/>
        <end position="263"/>
    </location>
    <ligand>
        <name>ATP</name>
        <dbReference type="ChEBI" id="CHEBI:30616"/>
    </ligand>
</feature>
<feature type="binding site" evidence="2">
    <location>
        <begin position="304"/>
        <end position="312"/>
    </location>
    <ligand>
        <name>ATP</name>
        <dbReference type="ChEBI" id="CHEBI:30616"/>
    </ligand>
</feature>
<feature type="modified residue" description="Phosphoserine" evidence="9">
    <location>
        <position position="14"/>
    </location>
</feature>
<feature type="sequence conflict" description="In Ref. 4; AAM14075." evidence="8" ref="4">
    <original>E</original>
    <variation>G</variation>
    <location>
        <position position="79"/>
    </location>
</feature>
<feature type="sequence conflict" description="In Ref. 1; CAB61875." evidence="8" ref="1">
    <original>G</original>
    <variation>R</variation>
    <location>
        <position position="865"/>
    </location>
</feature>
<evidence type="ECO:0000250" key="1"/>
<evidence type="ECO:0000255" key="2"/>
<evidence type="ECO:0000255" key="3">
    <source>
        <dbReference type="PROSITE-ProRule" id="PRU00116"/>
    </source>
</evidence>
<evidence type="ECO:0000255" key="4">
    <source>
        <dbReference type="PROSITE-ProRule" id="PRU00782"/>
    </source>
</evidence>
<evidence type="ECO:0000255" key="5">
    <source>
        <dbReference type="PROSITE-ProRule" id="PRU01190"/>
    </source>
</evidence>
<evidence type="ECO:0000256" key="6">
    <source>
        <dbReference type="SAM" id="MobiDB-lite"/>
    </source>
</evidence>
<evidence type="ECO:0000269" key="7">
    <source>
    </source>
</evidence>
<evidence type="ECO:0000305" key="8"/>
<evidence type="ECO:0007744" key="9">
    <source>
    </source>
</evidence>
<dbReference type="EMBL" id="X69505">
    <property type="protein sequence ID" value="CAB61875.1"/>
    <property type="molecule type" value="mRNA"/>
</dbReference>
<dbReference type="EMBL" id="AP002050">
    <property type="protein sequence ID" value="BAB03161.1"/>
    <property type="molecule type" value="Genomic_DNA"/>
</dbReference>
<dbReference type="EMBL" id="CP002686">
    <property type="protein sequence ID" value="AEE76312.1"/>
    <property type="molecule type" value="Genomic_DNA"/>
</dbReference>
<dbReference type="EMBL" id="CP002686">
    <property type="protein sequence ID" value="ANM63574.1"/>
    <property type="molecule type" value="Genomic_DNA"/>
</dbReference>
<dbReference type="EMBL" id="CP002686">
    <property type="protein sequence ID" value="ANM63575.1"/>
    <property type="molecule type" value="Genomic_DNA"/>
</dbReference>
<dbReference type="EMBL" id="AY091126">
    <property type="protein sequence ID" value="AAM14075.1"/>
    <property type="molecule type" value="mRNA"/>
</dbReference>
<dbReference type="EMBL" id="BT001941">
    <property type="protein sequence ID" value="AAN71940.1"/>
    <property type="molecule type" value="mRNA"/>
</dbReference>
<dbReference type="PIR" id="S33812">
    <property type="entry name" value="S33812"/>
</dbReference>
<dbReference type="RefSeq" id="NP_001325653.1">
    <molecule id="Q9LHE9-1"/>
    <property type="nucleotide sequence ID" value="NM_001338433.1"/>
</dbReference>
<dbReference type="RefSeq" id="NP_001325654.1">
    <molecule id="Q9LHE9-1"/>
    <property type="nucleotide sequence ID" value="NM_001338432.1"/>
</dbReference>
<dbReference type="RefSeq" id="NP_188630.1">
    <molecule id="Q9LHE9-1"/>
    <property type="nucleotide sequence ID" value="NM_112886.4"/>
</dbReference>
<dbReference type="SMR" id="Q9LHE9"/>
<dbReference type="BioGRID" id="6866">
    <property type="interactions" value="2"/>
</dbReference>
<dbReference type="FunCoup" id="Q9LHE9">
    <property type="interactions" value="325"/>
</dbReference>
<dbReference type="IntAct" id="Q9LHE9">
    <property type="interactions" value="1"/>
</dbReference>
<dbReference type="STRING" id="3702.Q9LHE9"/>
<dbReference type="iPTMnet" id="Q9LHE9"/>
<dbReference type="PaxDb" id="3702-AT3G19960.2"/>
<dbReference type="EnsemblPlants" id="AT3G19960.1">
    <molecule id="Q9LHE9-1"/>
    <property type="protein sequence ID" value="AT3G19960.1"/>
    <property type="gene ID" value="AT3G19960"/>
</dbReference>
<dbReference type="EnsemblPlants" id="AT3G19960.4">
    <molecule id="Q9LHE9-1"/>
    <property type="protein sequence ID" value="AT3G19960.4"/>
    <property type="gene ID" value="AT3G19960"/>
</dbReference>
<dbReference type="EnsemblPlants" id="AT3G19960.5">
    <molecule id="Q9LHE9-1"/>
    <property type="protein sequence ID" value="AT3G19960.5"/>
    <property type="gene ID" value="AT3G19960"/>
</dbReference>
<dbReference type="GeneID" id="821534"/>
<dbReference type="Gramene" id="AT3G19960.1">
    <molecule id="Q9LHE9-1"/>
    <property type="protein sequence ID" value="AT3G19960.1"/>
    <property type="gene ID" value="AT3G19960"/>
</dbReference>
<dbReference type="Gramene" id="AT3G19960.4">
    <molecule id="Q9LHE9-1"/>
    <property type="protein sequence ID" value="AT3G19960.4"/>
    <property type="gene ID" value="AT3G19960"/>
</dbReference>
<dbReference type="Gramene" id="AT3G19960.5">
    <molecule id="Q9LHE9-1"/>
    <property type="protein sequence ID" value="AT3G19960.5"/>
    <property type="gene ID" value="AT3G19960"/>
</dbReference>
<dbReference type="KEGG" id="ath:AT3G19960"/>
<dbReference type="Araport" id="AT3G19960"/>
<dbReference type="TAIR" id="AT3G19960">
    <property type="gene designation" value="ATM1"/>
</dbReference>
<dbReference type="eggNOG" id="KOG0160">
    <property type="taxonomic scope" value="Eukaryota"/>
</dbReference>
<dbReference type="HOGENOM" id="CLU_000192_7_2_1"/>
<dbReference type="InParanoid" id="Q9LHE9"/>
<dbReference type="PhylomeDB" id="Q9LHE9"/>
<dbReference type="PRO" id="PR:Q9LHE9"/>
<dbReference type="Proteomes" id="UP000006548">
    <property type="component" value="Chromosome 3"/>
</dbReference>
<dbReference type="ExpressionAtlas" id="Q9LHE9">
    <property type="expression patterns" value="baseline and differential"/>
</dbReference>
<dbReference type="GO" id="GO:0005783">
    <property type="term" value="C:endoplasmic reticulum"/>
    <property type="evidence" value="ECO:0007669"/>
    <property type="project" value="UniProtKB-SubCell"/>
</dbReference>
<dbReference type="GO" id="GO:0005768">
    <property type="term" value="C:endosome"/>
    <property type="evidence" value="ECO:0007669"/>
    <property type="project" value="UniProtKB-SubCell"/>
</dbReference>
<dbReference type="GO" id="GO:0016459">
    <property type="term" value="C:myosin complex"/>
    <property type="evidence" value="ECO:0007669"/>
    <property type="project" value="UniProtKB-KW"/>
</dbReference>
<dbReference type="GO" id="GO:0009524">
    <property type="term" value="C:phragmoplast"/>
    <property type="evidence" value="ECO:0007669"/>
    <property type="project" value="UniProtKB-SubCell"/>
</dbReference>
<dbReference type="GO" id="GO:0009506">
    <property type="term" value="C:plasmodesma"/>
    <property type="evidence" value="ECO:0007669"/>
    <property type="project" value="UniProtKB-SubCell"/>
</dbReference>
<dbReference type="GO" id="GO:0003779">
    <property type="term" value="F:actin binding"/>
    <property type="evidence" value="ECO:0007669"/>
    <property type="project" value="UniProtKB-KW"/>
</dbReference>
<dbReference type="GO" id="GO:0005524">
    <property type="term" value="F:ATP binding"/>
    <property type="evidence" value="ECO:0007669"/>
    <property type="project" value="UniProtKB-KW"/>
</dbReference>
<dbReference type="GO" id="GO:0005516">
    <property type="term" value="F:calmodulin binding"/>
    <property type="evidence" value="ECO:0007669"/>
    <property type="project" value="UniProtKB-KW"/>
</dbReference>
<dbReference type="GO" id="GO:0003774">
    <property type="term" value="F:cytoskeletal motor activity"/>
    <property type="evidence" value="ECO:0007669"/>
    <property type="project" value="InterPro"/>
</dbReference>
<dbReference type="GO" id="GO:0030048">
    <property type="term" value="P:actin filament-based movement"/>
    <property type="evidence" value="ECO:0007669"/>
    <property type="project" value="UniProtKB-ARBA"/>
</dbReference>
<dbReference type="GO" id="GO:0006897">
    <property type="term" value="P:endocytosis"/>
    <property type="evidence" value="ECO:0007669"/>
    <property type="project" value="UniProtKB-KW"/>
</dbReference>
<dbReference type="CDD" id="cd01383">
    <property type="entry name" value="MYSc_Myo8"/>
    <property type="match status" value="1"/>
</dbReference>
<dbReference type="FunFam" id="1.20.5.190:FF:000064">
    <property type="entry name" value="Myosin 2"/>
    <property type="match status" value="1"/>
</dbReference>
<dbReference type="FunFam" id="1.10.10.820:FF:000001">
    <property type="entry name" value="Myosin heavy chain"/>
    <property type="match status" value="1"/>
</dbReference>
<dbReference type="FunFam" id="1.20.58.530:FF:000013">
    <property type="entry name" value="Unconventional myosin-XIX"/>
    <property type="match status" value="1"/>
</dbReference>
<dbReference type="Gene3D" id="1.10.10.820">
    <property type="match status" value="1"/>
</dbReference>
<dbReference type="Gene3D" id="1.20.5.190">
    <property type="match status" value="2"/>
</dbReference>
<dbReference type="Gene3D" id="1.20.58.530">
    <property type="match status" value="1"/>
</dbReference>
<dbReference type="Gene3D" id="3.30.70.1590">
    <property type="match status" value="1"/>
</dbReference>
<dbReference type="Gene3D" id="3.40.850.10">
    <property type="entry name" value="Kinesin motor domain"/>
    <property type="match status" value="1"/>
</dbReference>
<dbReference type="Gene3D" id="1.20.120.720">
    <property type="entry name" value="Myosin VI head, motor domain, U50 subdomain"/>
    <property type="match status" value="1"/>
</dbReference>
<dbReference type="InterPro" id="IPR000048">
    <property type="entry name" value="IQ_motif_EF-hand-BS"/>
</dbReference>
<dbReference type="InterPro" id="IPR036961">
    <property type="entry name" value="Kinesin_motor_dom_sf"/>
</dbReference>
<dbReference type="InterPro" id="IPR001609">
    <property type="entry name" value="Myosin_head_motor_dom-like"/>
</dbReference>
<dbReference type="InterPro" id="IPR004009">
    <property type="entry name" value="Myosin_N"/>
</dbReference>
<dbReference type="InterPro" id="IPR036022">
    <property type="entry name" value="MYSc_Myo8"/>
</dbReference>
<dbReference type="InterPro" id="IPR027417">
    <property type="entry name" value="P-loop_NTPase"/>
</dbReference>
<dbReference type="PANTHER" id="PTHR13140">
    <property type="entry name" value="MYOSIN"/>
    <property type="match status" value="1"/>
</dbReference>
<dbReference type="PANTHER" id="PTHR13140:SF780">
    <property type="entry name" value="MYOSIN-1"/>
    <property type="match status" value="1"/>
</dbReference>
<dbReference type="Pfam" id="PF00612">
    <property type="entry name" value="IQ"/>
    <property type="match status" value="2"/>
</dbReference>
<dbReference type="Pfam" id="PF00063">
    <property type="entry name" value="Myosin_head"/>
    <property type="match status" value="1"/>
</dbReference>
<dbReference type="Pfam" id="PF25369">
    <property type="entry name" value="SH3_VIII-1_N"/>
    <property type="match status" value="1"/>
</dbReference>
<dbReference type="PRINTS" id="PR00193">
    <property type="entry name" value="MYOSINHEAVY"/>
</dbReference>
<dbReference type="SMART" id="SM00015">
    <property type="entry name" value="IQ"/>
    <property type="match status" value="4"/>
</dbReference>
<dbReference type="SMART" id="SM00242">
    <property type="entry name" value="MYSc"/>
    <property type="match status" value="1"/>
</dbReference>
<dbReference type="SUPFAM" id="SSF52540">
    <property type="entry name" value="P-loop containing nucleoside triphosphate hydrolases"/>
    <property type="match status" value="1"/>
</dbReference>
<dbReference type="SUPFAM" id="SSF57997">
    <property type="entry name" value="Tropomyosin"/>
    <property type="match status" value="1"/>
</dbReference>
<dbReference type="PROSITE" id="PS50096">
    <property type="entry name" value="IQ"/>
    <property type="match status" value="3"/>
</dbReference>
<dbReference type="PROSITE" id="PS51456">
    <property type="entry name" value="MYOSIN_MOTOR"/>
    <property type="match status" value="1"/>
</dbReference>
<dbReference type="PROSITE" id="PS51844">
    <property type="entry name" value="SH3_LIKE"/>
    <property type="match status" value="1"/>
</dbReference>
<organism>
    <name type="scientific">Arabidopsis thaliana</name>
    <name type="common">Mouse-ear cress</name>
    <dbReference type="NCBI Taxonomy" id="3702"/>
    <lineage>
        <taxon>Eukaryota</taxon>
        <taxon>Viridiplantae</taxon>
        <taxon>Streptophyta</taxon>
        <taxon>Embryophyta</taxon>
        <taxon>Tracheophyta</taxon>
        <taxon>Spermatophyta</taxon>
        <taxon>Magnoliopsida</taxon>
        <taxon>eudicotyledons</taxon>
        <taxon>Gunneridae</taxon>
        <taxon>Pentapetalae</taxon>
        <taxon>rosids</taxon>
        <taxon>malvids</taxon>
        <taxon>Brassicales</taxon>
        <taxon>Brassicaceae</taxon>
        <taxon>Camelineae</taxon>
        <taxon>Arabidopsis</taxon>
    </lineage>
</organism>
<gene>
    <name type="primary">VIII-1</name>
    <name type="synonym">ATM</name>
    <name type="synonym">ATM1</name>
    <name type="ordered locus">At3g19960</name>
    <name type="ORF">MZE19.1</name>
</gene>
<sequence length="1166" mass="131129">MSQKVTPFMQSLKSLPADYRFDGSPVSDRLENSSGASVRLTNSNVPRKGGLRNGVSRTDTAAGDSEDSPYSGHGVFVEEQSLTDDVDSGAATMPLPQSDERRWSDTSAYARKKILQSWIQLPNGNWELGKILSTSGEESVISLPEGKVIKVISETLVPANPDILDGVDDLMQLSYLNEPSVLYNLNYRYNQDMIYTKAGPVLVAVNPFKEVPLYGNRYIEAYRKKSNESPHVYAIADTAIREMIRDEVNQSIIISGESGAGKTETAKIAMQYLAALGGGSGIEYEILKTNPILEAFGNAKTLRNDNSSRFGKLIEIHFSESGKISGAQIQTFLLEKSRVVQCAEGERSYHIFYQLCAGASPALREKLNLTSAHEYKYLGQSNCYSINGVDDAERFHTVKEALDIVHVSKEDQESVFAMLAAVLWLGNVSFTVIDNENHVEPVADESLSTVAKLIGCNINELTLTLSKRNMRVRNDTIVQKLTLPQAIDARDALAKSIYSCLFDWLVEQINKSLAVGKRRTGRSISILDIYGFESFDKNSFEQFCINYANERLQQHFNRHLFKLEQEEYIQDGIDWTRVDFEDNQNCLSLFEKKPLGLLSLLDEESTFPNGTDLTLANKLKQHLQSNSCFRGDKGKLFTVVHYAGEVTYETTGFLEKNRDLLHSDSIQLLSSCSCLLPQAFASSMLIQSEKPVVGPLYKAGGADSQRLSVATKFKSQLFQLMQRLGNTTPHFIRCIKPNNIQSPGVYEQGLVLQQLRCCGVLEVVRISRSGFPTRMSHQKFSRRYGFLLVENIADRDPLSVSVAILHQFNILPEMYQVGYTKLFFRTGQIGVLEDTRNRTLHGILRVQSSFRGYQARCLLKELKRGISILQSFVRGEKIRKEFAELRRRHKAAATIQSQVKSKIARIQYKGIADASVVIQSAIRGWLVRRCSGDIGWLKSGGAKTNELGEVLVKASVLSELQRRVLKAEAALREKEEENDILQQRLQQYENRWSEYETKMKSMEEIWQKQMRSLQSSLSIAKKSLAVEDSARNSDASVNASDATDWDSSSNQFRSQTSNGVGSRLQPMSAGLSVIGRLAEEFEQRAQVFGDDAKFLVEVKSGQVEANLDPDRELRRLKQMFETWKKDYGGRLRETKLILSKLGSEESSGSMEKVKRKWWGRRNSTRY</sequence>
<protein>
    <recommendedName>
        <fullName>Myosin-1</fullName>
    </recommendedName>
    <alternativeName>
        <fullName>AtATM1</fullName>
    </alternativeName>
</protein>
<name>MYO1_ARATH</name>
<accession>Q9LHE9</accession>
<accession>Q8RWT2</accession>
<accession>Q9SNF0</accession>
<comment type="function">
    <text evidence="1 7">Myosin heavy chain that is required for the cell cycle-regulated transport of various organelles and proteins for their segregation. Functions by binding with its tail domain to receptor proteins on organelles and exerting force with its N-terminal motor domain against actin filaments, thereby transporting its cargo along polarized actin cables (By similarity). Involved in endocytosis via its action in endosomal trafficking.</text>
</comment>
<comment type="subunit">
    <text evidence="1">Homodimer.</text>
</comment>
<comment type="subcellular location">
    <subcellularLocation>
        <location>Cell junction</location>
        <location>Plasmodesma</location>
    </subcellularLocation>
    <subcellularLocation>
        <location>Cytoplasm</location>
        <location>Cytoskeleton</location>
        <location>Phragmoplast</location>
    </subcellularLocation>
    <subcellularLocation>
        <location>Endosome</location>
    </subcellularLocation>
    <subcellularLocation>
        <location>Endoplasmic reticulum</location>
    </subcellularLocation>
</comment>
<comment type="alternative products">
    <event type="alternative splicing"/>
    <isoform>
        <id>Q9LHE9-1</id>
        <name>1</name>
        <sequence type="displayed"/>
    </isoform>
    <text>A number of isoforms are produced. According to EST sequences.</text>
</comment>
<comment type="domain">
    <text evidence="1">IQ domain mediates interaction with calmodulin.</text>
</comment>
<comment type="similarity">
    <text evidence="8">Belongs to the TRAFAC class myosin-kinesin ATPase superfamily. Myosin family. Plant myosin class VIII subfamily.</text>
</comment>
<reference key="1">
    <citation type="journal article" date="1993" name="J. Mol. Biol.">
        <title>A myosin-like protein from a higher plant.</title>
        <authorList>
            <person name="Knight A.E."/>
            <person name="Kendrick-Jones J."/>
        </authorList>
    </citation>
    <scope>NUCLEOTIDE SEQUENCE [MRNA]</scope>
    <source>
        <strain>cv. Landsberg erecta</strain>
    </source>
</reference>
<reference key="2">
    <citation type="journal article" date="2000" name="DNA Res.">
        <title>Structural analysis of Arabidopsis thaliana chromosome 3. II. Sequence features of the 4,251,695 bp regions covered by 90 P1, TAC and BAC clones.</title>
        <authorList>
            <person name="Kaneko T."/>
            <person name="Katoh T."/>
            <person name="Sato S."/>
            <person name="Nakamura Y."/>
            <person name="Asamizu E."/>
            <person name="Tabata S."/>
        </authorList>
    </citation>
    <scope>NUCLEOTIDE SEQUENCE [LARGE SCALE GENOMIC DNA]</scope>
    <source>
        <strain>cv. Columbia</strain>
    </source>
</reference>
<reference key="3">
    <citation type="journal article" date="2017" name="Plant J.">
        <title>Araport11: a complete reannotation of the Arabidopsis thaliana reference genome.</title>
        <authorList>
            <person name="Cheng C.Y."/>
            <person name="Krishnakumar V."/>
            <person name="Chan A.P."/>
            <person name="Thibaud-Nissen F."/>
            <person name="Schobel S."/>
            <person name="Town C.D."/>
        </authorList>
    </citation>
    <scope>GENOME REANNOTATION</scope>
    <source>
        <strain>cv. Columbia</strain>
    </source>
</reference>
<reference key="4">
    <citation type="journal article" date="2003" name="Science">
        <title>Empirical analysis of transcriptional activity in the Arabidopsis genome.</title>
        <authorList>
            <person name="Yamada K."/>
            <person name="Lim J."/>
            <person name="Dale J.M."/>
            <person name="Chen H."/>
            <person name="Shinn P."/>
            <person name="Palm C.J."/>
            <person name="Southwick A.M."/>
            <person name="Wu H.C."/>
            <person name="Kim C.J."/>
            <person name="Nguyen M."/>
            <person name="Pham P.K."/>
            <person name="Cheuk R.F."/>
            <person name="Karlin-Newmann G."/>
            <person name="Liu S.X."/>
            <person name="Lam B."/>
            <person name="Sakano H."/>
            <person name="Wu T."/>
            <person name="Yu G."/>
            <person name="Miranda M."/>
            <person name="Quach H.L."/>
            <person name="Tripp M."/>
            <person name="Chang C.H."/>
            <person name="Lee J.M."/>
            <person name="Toriumi M.J."/>
            <person name="Chan M.M."/>
            <person name="Tang C.C."/>
            <person name="Onodera C.S."/>
            <person name="Deng J.M."/>
            <person name="Akiyama K."/>
            <person name="Ansari Y."/>
            <person name="Arakawa T."/>
            <person name="Banh J."/>
            <person name="Banno F."/>
            <person name="Bowser L."/>
            <person name="Brooks S.Y."/>
            <person name="Carninci P."/>
            <person name="Chao Q."/>
            <person name="Choy N."/>
            <person name="Enju A."/>
            <person name="Goldsmith A.D."/>
            <person name="Gurjal M."/>
            <person name="Hansen N.F."/>
            <person name="Hayashizaki Y."/>
            <person name="Johnson-Hopson C."/>
            <person name="Hsuan V.W."/>
            <person name="Iida K."/>
            <person name="Karnes M."/>
            <person name="Khan S."/>
            <person name="Koesema E."/>
            <person name="Ishida J."/>
            <person name="Jiang P.X."/>
            <person name="Jones T."/>
            <person name="Kawai J."/>
            <person name="Kamiya A."/>
            <person name="Meyers C."/>
            <person name="Nakajima M."/>
            <person name="Narusaka M."/>
            <person name="Seki M."/>
            <person name="Sakurai T."/>
            <person name="Satou M."/>
            <person name="Tamse R."/>
            <person name="Vaysberg M."/>
            <person name="Wallender E.K."/>
            <person name="Wong C."/>
            <person name="Yamamura Y."/>
            <person name="Yuan S."/>
            <person name="Shinozaki K."/>
            <person name="Davis R.W."/>
            <person name="Theologis A."/>
            <person name="Ecker J.R."/>
        </authorList>
    </citation>
    <scope>NUCLEOTIDE SEQUENCE [LARGE SCALE MRNA]</scope>
    <source>
        <strain>cv. Columbia</strain>
    </source>
</reference>
<reference key="5">
    <citation type="journal article" date="1999" name="Plant J.">
        <title>Characterization of the unconventional myosin VIII in plant cells and its localization at the post-cytokinetic cell wall.</title>
        <authorList>
            <person name="Reichelt S."/>
            <person name="Knight A.E."/>
            <person name="Hodge T.P."/>
            <person name="Baluska F."/>
            <person name="Samaj J."/>
            <person name="Volkmann D."/>
            <person name="Kendrick-Jones J."/>
        </authorList>
    </citation>
    <scope>SUBCELLULAR LOCATION</scope>
</reference>
<reference key="6">
    <citation type="journal article" date="2000" name="J. Cell Sci.">
        <title>A myosin family tree.</title>
        <authorList>
            <person name="Hodge T."/>
            <person name="Cope M.J."/>
        </authorList>
    </citation>
    <scope>GENE FAMILY</scope>
</reference>
<reference key="7">
    <citation type="journal article" date="2001" name="Genome Biol.">
        <title>Analysis of the myosins encoded in the recently completed Arabidopsis thaliana genome sequence.</title>
        <authorList>
            <person name="Reddy A.S."/>
            <person name="Day I.S."/>
        </authorList>
    </citation>
    <scope>GENE FAMILY</scope>
</reference>
<reference key="8">
    <citation type="journal article" date="2004" name="Plant J.">
        <title>Molecular dissection of plant cytokinesis and phragmoplast structure: a survey of GFP-tagged proteins.</title>
        <authorList>
            <person name="Van Damme D."/>
            <person name="Bouget F.-Y."/>
            <person name="Van Poucke K."/>
            <person name="Inze D."/>
            <person name="Geelen D."/>
        </authorList>
    </citation>
    <scope>SUBCELLULAR LOCATION</scope>
</reference>
<reference key="9">
    <citation type="journal article" date="2008" name="BMC Plant Biol.">
        <title>Different subcellular localizations and functions of Arabidopsis myosin VIII.</title>
        <authorList>
            <person name="Golomb L."/>
            <person name="Abu-Abied M."/>
            <person name="Belausov E."/>
            <person name="Sadot E."/>
        </authorList>
    </citation>
    <scope>FUNCTION</scope>
    <scope>SUBCELLULAR LOCATION</scope>
</reference>
<reference key="10">
    <citation type="journal article" date="2008" name="Cell Motil. Cytoskeleton">
        <title>The Arabidopsis class VIII myosin ATM2 is involved in endocytosis.</title>
        <authorList>
            <person name="Sattarzadeh A."/>
            <person name="Franzen R."/>
            <person name="Schmelzer E."/>
        </authorList>
    </citation>
    <scope>SUBCELLULAR LOCATION</scope>
</reference>
<reference key="11">
    <citation type="journal article" date="2009" name="Plant Physiol.">
        <title>Large-scale Arabidopsis phosphoproteome profiling reveals novel chloroplast kinase substrates and phosphorylation networks.</title>
        <authorList>
            <person name="Reiland S."/>
            <person name="Messerli G."/>
            <person name="Baerenfaller K."/>
            <person name="Gerrits B."/>
            <person name="Endler A."/>
            <person name="Grossmann J."/>
            <person name="Gruissem W."/>
            <person name="Baginsky S."/>
        </authorList>
    </citation>
    <scope>PHOSPHORYLATION [LARGE SCALE ANALYSIS] AT SER-14</scope>
    <scope>IDENTIFICATION BY MASS SPECTROMETRY [LARGE SCALE ANALYSIS]</scope>
</reference>
<reference key="12">
    <citation type="journal article" date="2011" name="Plant Physiol.">
        <title>Expression, splicing, and evolution of the myosin gene family in plants.</title>
        <authorList>
            <person name="Peremyslov V.V."/>
            <person name="Mockler T.C."/>
            <person name="Filichkin S.A."/>
            <person name="Fox S.E."/>
            <person name="Jaiswal P."/>
            <person name="Makarova K.S."/>
            <person name="Koonin E.V."/>
            <person name="Dolja V.V."/>
        </authorList>
    </citation>
    <scope>GENE FAMILY</scope>
    <scope>NOMENCLATURE</scope>
</reference>
<keyword id="KW-0009">Actin-binding</keyword>
<keyword id="KW-0025">Alternative splicing</keyword>
<keyword id="KW-0067">ATP-binding</keyword>
<keyword id="KW-0112">Calmodulin-binding</keyword>
<keyword id="KW-0965">Cell junction</keyword>
<keyword id="KW-0175">Coiled coil</keyword>
<keyword id="KW-0963">Cytoplasm</keyword>
<keyword id="KW-0206">Cytoskeleton</keyword>
<keyword id="KW-0254">Endocytosis</keyword>
<keyword id="KW-0256">Endoplasmic reticulum</keyword>
<keyword id="KW-0967">Endosome</keyword>
<keyword id="KW-0505">Motor protein</keyword>
<keyword id="KW-0518">Myosin</keyword>
<keyword id="KW-0547">Nucleotide-binding</keyword>
<keyword id="KW-0597">Phosphoprotein</keyword>
<keyword id="KW-1185">Reference proteome</keyword>
<keyword id="KW-0677">Repeat</keyword>
<proteinExistence type="evidence at protein level"/>